<protein>
    <recommendedName>
        <fullName>Protein FAM89A</fullName>
    </recommendedName>
</protein>
<comment type="similarity">
    <text evidence="1">Belongs to the FAM89 family.</text>
</comment>
<organism>
    <name type="scientific">Bos taurus</name>
    <name type="common">Bovine</name>
    <dbReference type="NCBI Taxonomy" id="9913"/>
    <lineage>
        <taxon>Eukaryota</taxon>
        <taxon>Metazoa</taxon>
        <taxon>Chordata</taxon>
        <taxon>Craniata</taxon>
        <taxon>Vertebrata</taxon>
        <taxon>Euteleostomi</taxon>
        <taxon>Mammalia</taxon>
        <taxon>Eutheria</taxon>
        <taxon>Laurasiatheria</taxon>
        <taxon>Artiodactyla</taxon>
        <taxon>Ruminantia</taxon>
        <taxon>Pecora</taxon>
        <taxon>Bovidae</taxon>
        <taxon>Bovinae</taxon>
        <taxon>Bos</taxon>
    </lineage>
</organism>
<evidence type="ECO:0000305" key="1"/>
<reference key="1">
    <citation type="submission" date="2007-07" db="EMBL/GenBank/DDBJ databases">
        <authorList>
            <consortium name="NIH - Mammalian Gene Collection (MGC) project"/>
        </authorList>
    </citation>
    <scope>NUCLEOTIDE SEQUENCE [LARGE SCALE MRNA]</scope>
    <source>
        <strain>Hereford</strain>
        <tissue>Fetal skin</tissue>
    </source>
</reference>
<sequence>MSGAGAAGSVRGLRVDGLPPLPKSLSGLLHSASGGGASGGWRHLERLYAQKSRIQDELSRGSAGGGGARAAALPAKPPNLDAALALLRKEMVGLRQLDMSLLCQLYSLYESIQEYKGACQAAASPDSTYALENGFFDEEDEYFQEQNSLQDGKERGPPRDLMLPVSPLPSGDWILESI</sequence>
<dbReference type="EMBL" id="BC149808">
    <property type="protein sequence ID" value="AAI49809.1"/>
    <property type="molecule type" value="mRNA"/>
</dbReference>
<dbReference type="RefSeq" id="NP_001094727.1">
    <property type="nucleotide sequence ID" value="NM_001101257.1"/>
</dbReference>
<dbReference type="SMR" id="A6QQF7"/>
<dbReference type="FunCoup" id="A6QQF7">
    <property type="interactions" value="10"/>
</dbReference>
<dbReference type="STRING" id="9913.ENSBTAP00000031331"/>
<dbReference type="PaxDb" id="9913-ENSBTAP00000031331"/>
<dbReference type="Ensembl" id="ENSBTAT00000031376.4">
    <property type="protein sequence ID" value="ENSBTAP00000031331.3"/>
    <property type="gene ID" value="ENSBTAG00000023073.4"/>
</dbReference>
<dbReference type="GeneID" id="616421"/>
<dbReference type="KEGG" id="bta:616421"/>
<dbReference type="CTD" id="375061"/>
<dbReference type="VEuPathDB" id="HostDB:ENSBTAG00000023073"/>
<dbReference type="VGNC" id="VGNC:28842">
    <property type="gene designation" value="FAM89A"/>
</dbReference>
<dbReference type="eggNOG" id="ENOG502S28T">
    <property type="taxonomic scope" value="Eukaryota"/>
</dbReference>
<dbReference type="GeneTree" id="ENSGT00940000153370"/>
<dbReference type="HOGENOM" id="CLU_128818_1_1_1"/>
<dbReference type="InParanoid" id="A6QQF7"/>
<dbReference type="OMA" id="MMENGFF"/>
<dbReference type="OrthoDB" id="1681166at2759"/>
<dbReference type="Proteomes" id="UP000009136">
    <property type="component" value="Chromosome 28"/>
</dbReference>
<dbReference type="Bgee" id="ENSBTAG00000023073">
    <property type="expression patterns" value="Expressed in digestive system secreted substance and 100 other cell types or tissues"/>
</dbReference>
<dbReference type="PANTHER" id="PTHR46949">
    <property type="entry name" value="LEUCINE REPEAT ADAPTER PROTEIN 25"/>
    <property type="match status" value="1"/>
</dbReference>
<dbReference type="PANTHER" id="PTHR46949:SF3">
    <property type="entry name" value="PROTEIN FAM89A"/>
    <property type="match status" value="1"/>
</dbReference>
<keyword id="KW-1185">Reference proteome</keyword>
<feature type="chain" id="PRO_0000358920" description="Protein FAM89A">
    <location>
        <begin position="1"/>
        <end position="178"/>
    </location>
</feature>
<proteinExistence type="evidence at transcript level"/>
<gene>
    <name type="primary">FAM89A</name>
</gene>
<accession>A6QQF7</accession>
<name>FA89A_BOVIN</name>